<protein>
    <recommendedName>
        <fullName>Kelch repeat-containing protein At1g19470</fullName>
    </recommendedName>
</protein>
<feature type="chain" id="PRO_0000274926" description="Kelch repeat-containing protein At1g19470">
    <location>
        <begin position="1"/>
        <end position="412"/>
    </location>
</feature>
<feature type="repeat" description="Kelch 1">
    <location>
        <begin position="156"/>
        <end position="202"/>
    </location>
</feature>
<feature type="repeat" description="Kelch 2">
    <location>
        <begin position="203"/>
        <end position="250"/>
    </location>
</feature>
<feature type="repeat" description="Kelch 3">
    <location>
        <begin position="255"/>
        <end position="291"/>
    </location>
</feature>
<feature type="repeat" description="Kelch 4">
    <location>
        <begin position="292"/>
        <end position="345"/>
    </location>
</feature>
<feature type="region of interest" description="Disordered" evidence="1">
    <location>
        <begin position="1"/>
        <end position="55"/>
    </location>
</feature>
<feature type="compositionally biased region" description="Basic and acidic residues" evidence="1">
    <location>
        <begin position="16"/>
        <end position="26"/>
    </location>
</feature>
<evidence type="ECO:0000256" key="1">
    <source>
        <dbReference type="SAM" id="MobiDB-lite"/>
    </source>
</evidence>
<evidence type="ECO:0000305" key="2"/>
<reference key="1">
    <citation type="journal article" date="2000" name="Nature">
        <title>Sequence and analysis of chromosome 1 of the plant Arabidopsis thaliana.</title>
        <authorList>
            <person name="Theologis A."/>
            <person name="Ecker J.R."/>
            <person name="Palm C.J."/>
            <person name="Federspiel N.A."/>
            <person name="Kaul S."/>
            <person name="White O."/>
            <person name="Alonso J."/>
            <person name="Altafi H."/>
            <person name="Araujo R."/>
            <person name="Bowman C.L."/>
            <person name="Brooks S.Y."/>
            <person name="Buehler E."/>
            <person name="Chan A."/>
            <person name="Chao Q."/>
            <person name="Chen H."/>
            <person name="Cheuk R.F."/>
            <person name="Chin C.W."/>
            <person name="Chung M.K."/>
            <person name="Conn L."/>
            <person name="Conway A.B."/>
            <person name="Conway A.R."/>
            <person name="Creasy T.H."/>
            <person name="Dewar K."/>
            <person name="Dunn P."/>
            <person name="Etgu P."/>
            <person name="Feldblyum T.V."/>
            <person name="Feng J.-D."/>
            <person name="Fong B."/>
            <person name="Fujii C.Y."/>
            <person name="Gill J.E."/>
            <person name="Goldsmith A.D."/>
            <person name="Haas B."/>
            <person name="Hansen N.F."/>
            <person name="Hughes B."/>
            <person name="Huizar L."/>
            <person name="Hunter J.L."/>
            <person name="Jenkins J."/>
            <person name="Johnson-Hopson C."/>
            <person name="Khan S."/>
            <person name="Khaykin E."/>
            <person name="Kim C.J."/>
            <person name="Koo H.L."/>
            <person name="Kremenetskaia I."/>
            <person name="Kurtz D.B."/>
            <person name="Kwan A."/>
            <person name="Lam B."/>
            <person name="Langin-Hooper S."/>
            <person name="Lee A."/>
            <person name="Lee J.M."/>
            <person name="Lenz C.A."/>
            <person name="Li J.H."/>
            <person name="Li Y.-P."/>
            <person name="Lin X."/>
            <person name="Liu S.X."/>
            <person name="Liu Z.A."/>
            <person name="Luros J.S."/>
            <person name="Maiti R."/>
            <person name="Marziali A."/>
            <person name="Militscher J."/>
            <person name="Miranda M."/>
            <person name="Nguyen M."/>
            <person name="Nierman W.C."/>
            <person name="Osborne B.I."/>
            <person name="Pai G."/>
            <person name="Peterson J."/>
            <person name="Pham P.K."/>
            <person name="Rizzo M."/>
            <person name="Rooney T."/>
            <person name="Rowley D."/>
            <person name="Sakano H."/>
            <person name="Salzberg S.L."/>
            <person name="Schwartz J.R."/>
            <person name="Shinn P."/>
            <person name="Southwick A.M."/>
            <person name="Sun H."/>
            <person name="Tallon L.J."/>
            <person name="Tambunga G."/>
            <person name="Toriumi M.J."/>
            <person name="Town C.D."/>
            <person name="Utterback T."/>
            <person name="Van Aken S."/>
            <person name="Vaysberg M."/>
            <person name="Vysotskaia V.S."/>
            <person name="Walker M."/>
            <person name="Wu D."/>
            <person name="Yu G."/>
            <person name="Fraser C.M."/>
            <person name="Venter J.C."/>
            <person name="Davis R.W."/>
        </authorList>
    </citation>
    <scope>NUCLEOTIDE SEQUENCE [LARGE SCALE GENOMIC DNA]</scope>
    <source>
        <strain>cv. Columbia</strain>
    </source>
</reference>
<reference key="2">
    <citation type="journal article" date="2017" name="Plant J.">
        <title>Araport11: a complete reannotation of the Arabidopsis thaliana reference genome.</title>
        <authorList>
            <person name="Cheng C.Y."/>
            <person name="Krishnakumar V."/>
            <person name="Chan A.P."/>
            <person name="Thibaud-Nissen F."/>
            <person name="Schobel S."/>
            <person name="Town C.D."/>
        </authorList>
    </citation>
    <scope>GENOME REANNOTATION</scope>
    <source>
        <strain>cv. Columbia</strain>
    </source>
</reference>
<comment type="sequence caution" evidence="2">
    <conflict type="erroneous gene model prediction">
        <sequence resource="EMBL-CDS" id="AAF79430"/>
    </conflict>
    <text>The predicted gene At1g19460 has been split into 2 genes: At1g19460 and At1g19470.</text>
</comment>
<gene>
    <name type="ordered locus">At1g19470</name>
    <name type="ORF">F18O14.42</name>
</gene>
<accession>P0C2F7</accession>
<accession>Q9LN46</accession>
<dbReference type="EMBL" id="AC025808">
    <property type="protein sequence ID" value="AAF79430.1"/>
    <property type="status" value="ALT_SEQ"/>
    <property type="molecule type" value="Genomic_DNA"/>
</dbReference>
<dbReference type="EMBL" id="CP002684">
    <property type="protein sequence ID" value="AEE29855.1"/>
    <property type="molecule type" value="Genomic_DNA"/>
</dbReference>
<dbReference type="RefSeq" id="NP_173379.1">
    <property type="nucleotide sequence ID" value="NM_101803.1"/>
</dbReference>
<dbReference type="SMR" id="P0C2F7"/>
<dbReference type="iPTMnet" id="P0C2F7"/>
<dbReference type="PaxDb" id="3702-AT1G19470.1"/>
<dbReference type="EnsemblPlants" id="AT1G19470.1">
    <property type="protein sequence ID" value="AT1G19470.1"/>
    <property type="gene ID" value="AT1G19470"/>
</dbReference>
<dbReference type="GeneID" id="838531"/>
<dbReference type="Gramene" id="AT1G19470.1">
    <property type="protein sequence ID" value="AT1G19470.1"/>
    <property type="gene ID" value="AT1G19470"/>
</dbReference>
<dbReference type="KEGG" id="ath:AT1G19470"/>
<dbReference type="Araport" id="AT1G19470"/>
<dbReference type="TAIR" id="AT1G19470"/>
<dbReference type="eggNOG" id="KOG1072">
    <property type="taxonomic scope" value="Eukaryota"/>
</dbReference>
<dbReference type="HOGENOM" id="CLU_032521_1_1_1"/>
<dbReference type="InParanoid" id="P0C2F7"/>
<dbReference type="OMA" id="WYAYESK"/>
<dbReference type="PhylomeDB" id="P0C2F7"/>
<dbReference type="PRO" id="PR:P0C2F7"/>
<dbReference type="Proteomes" id="UP000006548">
    <property type="component" value="Chromosome 1"/>
</dbReference>
<dbReference type="ExpressionAtlas" id="P0C2F7">
    <property type="expression patterns" value="baseline"/>
</dbReference>
<dbReference type="Gene3D" id="2.120.10.80">
    <property type="entry name" value="Kelch-type beta propeller"/>
    <property type="match status" value="1"/>
</dbReference>
<dbReference type="InterPro" id="IPR050354">
    <property type="entry name" value="F-box/kelch-repeat_ARATH"/>
</dbReference>
<dbReference type="InterPro" id="IPR015915">
    <property type="entry name" value="Kelch-typ_b-propeller"/>
</dbReference>
<dbReference type="InterPro" id="IPR006652">
    <property type="entry name" value="Kelch_1"/>
</dbReference>
<dbReference type="PANTHER" id="PTHR24414:SF65">
    <property type="entry name" value="F-BOX DOMAIN-CONTAINING PROTEIN"/>
    <property type="match status" value="1"/>
</dbReference>
<dbReference type="PANTHER" id="PTHR24414">
    <property type="entry name" value="F-BOX/KELCH-REPEAT PROTEIN SKIP4"/>
    <property type="match status" value="1"/>
</dbReference>
<dbReference type="Pfam" id="PF25210">
    <property type="entry name" value="Kelch_FKB95"/>
    <property type="match status" value="1"/>
</dbReference>
<dbReference type="SMART" id="SM00612">
    <property type="entry name" value="Kelch"/>
    <property type="match status" value="2"/>
</dbReference>
<dbReference type="SUPFAM" id="SSF117281">
    <property type="entry name" value="Kelch motif"/>
    <property type="match status" value="1"/>
</dbReference>
<organism>
    <name type="scientific">Arabidopsis thaliana</name>
    <name type="common">Mouse-ear cress</name>
    <dbReference type="NCBI Taxonomy" id="3702"/>
    <lineage>
        <taxon>Eukaryota</taxon>
        <taxon>Viridiplantae</taxon>
        <taxon>Streptophyta</taxon>
        <taxon>Embryophyta</taxon>
        <taxon>Tracheophyta</taxon>
        <taxon>Spermatophyta</taxon>
        <taxon>Magnoliopsida</taxon>
        <taxon>eudicotyledons</taxon>
        <taxon>Gunneridae</taxon>
        <taxon>Pentapetalae</taxon>
        <taxon>rosids</taxon>
        <taxon>malvids</taxon>
        <taxon>Brassicales</taxon>
        <taxon>Brassicaceae</taxon>
        <taxon>Camelineae</taxon>
        <taxon>Arabidopsis</taxon>
    </lineage>
</organism>
<keyword id="KW-0880">Kelch repeat</keyword>
<keyword id="KW-1185">Reference proteome</keyword>
<keyword id="KW-0677">Repeat</keyword>
<proteinExistence type="evidence at transcript level"/>
<sequence length="412" mass="46540">MVNISEIPDDSNDGCDPNKKPEEQVLRRSRRIATRNENQNKKPKEEEEEDNRSVSFPIPNELTEACVALIRKCDYPSLSSVSSYFFNLIASSGLYETRSRLGLSETFLYAAIKFPDTNPANWYILHRNKVSSLRLTEVGSLPPVPWGCSVVTVGQEMYVIGGLLDIRRLQLMTLIDCRTHKCRSLPSMKRGRYKAAAGVVDGKIYVIGGFRMRKPDAEWIEVFDLKTQIWESLPGPYPRTSAGSQFSAHAVMEDKLYMLGSKFCLVYEPKRNGEWDASVGATPLKDLWDKTCCVVDDMLYTTDPRRTLGHPIVVYHPKDKTWRPVKGESLWSLPSYFFSKSEMANFGGKLVILGSNKSYVTGDCIGEKGIWCVMIELEKREGGEIWGKVESLDCVLGDINFLSVRLCQTLTI</sequence>
<name>Y1947_ARATH</name>